<keyword id="KW-1003">Cell membrane</keyword>
<keyword id="KW-0966">Cell projection</keyword>
<keyword id="KW-0868">Chloride</keyword>
<keyword id="KW-0869">Chloride channel</keyword>
<keyword id="KW-1015">Disulfide bond</keyword>
<keyword id="KW-0325">Glycoprotein</keyword>
<keyword id="KW-0407">Ion channel</keyword>
<keyword id="KW-0406">Ion transport</keyword>
<keyword id="KW-1071">Ligand-gated ion channel</keyword>
<keyword id="KW-0472">Membrane</keyword>
<keyword id="KW-0628">Postsynaptic cell membrane</keyword>
<keyword id="KW-0675">Receptor</keyword>
<keyword id="KW-1185">Reference proteome</keyword>
<keyword id="KW-0732">Signal</keyword>
<keyword id="KW-0770">Synapse</keyword>
<keyword id="KW-0812">Transmembrane</keyword>
<keyword id="KW-1133">Transmembrane helix</keyword>
<keyword id="KW-0813">Transport</keyword>
<accession>Q61603</accession>
<accession>A2AEA9</accession>
<accession>Q45V76</accession>
<accession>Q8VHF3</accession>
<comment type="function">
    <text evidence="4 7">Glycine receptors are ligand-gated chloride channels. Channel opening is triggered by extracellular glycine. Channel opening is also triggered by taurine and beta-alanine (PubMed:10762330). Plays a role in the down-regulation of neuronal excitability. Contributes to the generation of inhibitory postsynaptic currents (Probable).</text>
</comment>
<comment type="catalytic activity">
    <reaction evidence="4">
        <text>chloride(in) = chloride(out)</text>
        <dbReference type="Rhea" id="RHEA:29823"/>
        <dbReference type="ChEBI" id="CHEBI:17996"/>
    </reaction>
</comment>
<comment type="activity regulation">
    <text evidence="4">Inhibited by strychnine (PubMed:10762330).</text>
</comment>
<comment type="subunit">
    <text evidence="7">Homopentamer (in vitro). Heteropentamer composed of GLRA4 and GLRB.</text>
</comment>
<comment type="subcellular location">
    <subcellularLocation>
        <location evidence="8">Postsynaptic cell membrane</location>
        <topology evidence="7">Multi-pass membrane protein</topology>
    </subcellularLocation>
    <subcellularLocation>
        <location evidence="5 6">Synapse</location>
    </subcellularLocation>
    <subcellularLocation>
        <location evidence="5">Perikaryon</location>
    </subcellularLocation>
    <subcellularLocation>
        <location evidence="5">Cell projection</location>
        <location evidence="5">Dendrite</location>
    </subcellularLocation>
    <subcellularLocation>
        <location evidence="4 6 8">Cell membrane</location>
        <topology evidence="7">Multi-pass membrane protein</topology>
    </subcellularLocation>
</comment>
<comment type="tissue specificity">
    <text evidence="5 6">Detected in the retina inner plexiform layer, especially at the border between layer three and four (at protein level) (PubMed:17154252).</text>
</comment>
<comment type="miscellaneous">
    <text evidence="4">The alpha subunit binds strychnine.</text>
</comment>
<comment type="similarity">
    <text evidence="7">Belongs to the ligand-gated ion channel (TC 1.A.9) family. Glycine receptor (TC 1.A.9.3) subfamily. GLRA4 sub-subfamily.</text>
</comment>
<dbReference type="EMBL" id="DQ109809">
    <property type="protein sequence ID" value="AAZ17380.1"/>
    <property type="molecule type" value="mRNA"/>
</dbReference>
<dbReference type="EMBL" id="AL671887">
    <property type="status" value="NOT_ANNOTATED_CDS"/>
    <property type="molecule type" value="Genomic_DNA"/>
</dbReference>
<dbReference type="EMBL" id="X75850">
    <property type="protein sequence ID" value="CAA53468.1"/>
    <property type="molecule type" value="Genomic_DNA"/>
</dbReference>
<dbReference type="EMBL" id="X75851">
    <property type="protein sequence ID" value="CAA53468.1"/>
    <property type="status" value="JOINED"/>
    <property type="molecule type" value="Genomic_DNA"/>
</dbReference>
<dbReference type="EMBL" id="X75852">
    <property type="protein sequence ID" value="CAA53468.1"/>
    <property type="status" value="JOINED"/>
    <property type="molecule type" value="Genomic_DNA"/>
</dbReference>
<dbReference type="EMBL" id="X75853">
    <property type="protein sequence ID" value="CAA53468.1"/>
    <property type="status" value="JOINED"/>
    <property type="molecule type" value="Genomic_DNA"/>
</dbReference>
<dbReference type="EMBL" id="AF462147">
    <property type="protein sequence ID" value="AAL69899.1"/>
    <property type="molecule type" value="mRNA"/>
</dbReference>
<dbReference type="CCDS" id="CCDS53195.1"/>
<dbReference type="PIR" id="A49970">
    <property type="entry name" value="A49970"/>
</dbReference>
<dbReference type="RefSeq" id="NP_034427.2">
    <property type="nucleotide sequence ID" value="NM_010297.3"/>
</dbReference>
<dbReference type="SMR" id="Q61603"/>
<dbReference type="FunCoup" id="Q61603">
    <property type="interactions" value="262"/>
</dbReference>
<dbReference type="STRING" id="10090.ENSMUSP00000018739"/>
<dbReference type="BindingDB" id="Q61603"/>
<dbReference type="ChEMBL" id="CHEMBL3500"/>
<dbReference type="GlyCosmos" id="Q61603">
    <property type="glycosylation" value="1 site, No reported glycans"/>
</dbReference>
<dbReference type="GlyGen" id="Q61603">
    <property type="glycosylation" value="1 site"/>
</dbReference>
<dbReference type="iPTMnet" id="Q61603"/>
<dbReference type="PhosphoSitePlus" id="Q61603"/>
<dbReference type="PaxDb" id="10090-ENSMUSP00000018739"/>
<dbReference type="ProteomicsDB" id="267457"/>
<dbReference type="DNASU" id="14657"/>
<dbReference type="Ensembl" id="ENSMUST00000018739.5">
    <property type="protein sequence ID" value="ENSMUSP00000018739.5"/>
    <property type="gene ID" value="ENSMUSG00000018595.7"/>
</dbReference>
<dbReference type="GeneID" id="14657"/>
<dbReference type="KEGG" id="mmu:14657"/>
<dbReference type="UCSC" id="uc009uiz.2">
    <property type="organism name" value="mouse"/>
</dbReference>
<dbReference type="AGR" id="MGI:95750"/>
<dbReference type="CTD" id="441509"/>
<dbReference type="MGI" id="MGI:95750">
    <property type="gene designation" value="Glra4"/>
</dbReference>
<dbReference type="VEuPathDB" id="HostDB:ENSMUSG00000018595"/>
<dbReference type="eggNOG" id="KOG3644">
    <property type="taxonomic scope" value="Eukaryota"/>
</dbReference>
<dbReference type="GeneTree" id="ENSGT00940000158789"/>
<dbReference type="HOGENOM" id="CLU_010920_1_4_1"/>
<dbReference type="InParanoid" id="Q61603"/>
<dbReference type="OMA" id="WIPGTAP"/>
<dbReference type="OrthoDB" id="407674at2759"/>
<dbReference type="PhylomeDB" id="Q61603"/>
<dbReference type="TreeFam" id="TF315453"/>
<dbReference type="BioGRID-ORCS" id="14657">
    <property type="hits" value="2 hits in 77 CRISPR screens"/>
</dbReference>
<dbReference type="ChiTaRS" id="Glra4">
    <property type="organism name" value="mouse"/>
</dbReference>
<dbReference type="PRO" id="PR:Q61603"/>
<dbReference type="Proteomes" id="UP000000589">
    <property type="component" value="Chromosome X"/>
</dbReference>
<dbReference type="RNAct" id="Q61603">
    <property type="molecule type" value="protein"/>
</dbReference>
<dbReference type="Bgee" id="ENSMUSG00000018595">
    <property type="expression patterns" value="Expressed in animal zygote and 18 other cell types or tissues"/>
</dbReference>
<dbReference type="GO" id="GO:0034707">
    <property type="term" value="C:chloride channel complex"/>
    <property type="evidence" value="ECO:0007669"/>
    <property type="project" value="UniProtKB-KW"/>
</dbReference>
<dbReference type="GO" id="GO:0030425">
    <property type="term" value="C:dendrite"/>
    <property type="evidence" value="ECO:0007669"/>
    <property type="project" value="UniProtKB-SubCell"/>
</dbReference>
<dbReference type="GO" id="GO:0098690">
    <property type="term" value="C:glycinergic synapse"/>
    <property type="evidence" value="ECO:0000314"/>
    <property type="project" value="SynGO"/>
</dbReference>
<dbReference type="GO" id="GO:0043204">
    <property type="term" value="C:perikaryon"/>
    <property type="evidence" value="ECO:0007669"/>
    <property type="project" value="UniProtKB-SubCell"/>
</dbReference>
<dbReference type="GO" id="GO:0005886">
    <property type="term" value="C:plasma membrane"/>
    <property type="evidence" value="ECO:0000314"/>
    <property type="project" value="UniProtKB"/>
</dbReference>
<dbReference type="GO" id="GO:0099634">
    <property type="term" value="C:postsynaptic specialization membrane"/>
    <property type="evidence" value="ECO:0000314"/>
    <property type="project" value="SynGO"/>
</dbReference>
<dbReference type="GO" id="GO:0016934">
    <property type="term" value="F:extracellularly glycine-gated chloride channel activity"/>
    <property type="evidence" value="ECO:0000314"/>
    <property type="project" value="UniProtKB"/>
</dbReference>
<dbReference type="GO" id="GO:0016594">
    <property type="term" value="F:glycine binding"/>
    <property type="evidence" value="ECO:0007669"/>
    <property type="project" value="InterPro"/>
</dbReference>
<dbReference type="GO" id="GO:0004888">
    <property type="term" value="F:transmembrane signaling receptor activity"/>
    <property type="evidence" value="ECO:0007669"/>
    <property type="project" value="InterPro"/>
</dbReference>
<dbReference type="GO" id="GO:0022824">
    <property type="term" value="F:transmitter-gated monoatomic ion channel activity"/>
    <property type="evidence" value="ECO:0007669"/>
    <property type="project" value="InterPro"/>
</dbReference>
<dbReference type="GO" id="GO:1902476">
    <property type="term" value="P:chloride transmembrane transport"/>
    <property type="evidence" value="ECO:0000314"/>
    <property type="project" value="UniProtKB"/>
</dbReference>
<dbReference type="GO" id="GO:0043200">
    <property type="term" value="P:response to amino acid"/>
    <property type="evidence" value="ECO:0000314"/>
    <property type="project" value="UniProtKB"/>
</dbReference>
<dbReference type="CDD" id="cd19009">
    <property type="entry name" value="LGIC_ECD_GlyR_alpha"/>
    <property type="match status" value="1"/>
</dbReference>
<dbReference type="CDD" id="cd19060">
    <property type="entry name" value="LGIC_TM_GlyR_alpha"/>
    <property type="match status" value="1"/>
</dbReference>
<dbReference type="FunFam" id="2.70.170.10:FF:000002">
    <property type="entry name" value="Glycine receptor alpha 1 subunit"/>
    <property type="match status" value="1"/>
</dbReference>
<dbReference type="FunFam" id="1.20.58.390:FF:000003">
    <property type="entry name" value="Glycine receptor alpha 2 subunit"/>
    <property type="match status" value="1"/>
</dbReference>
<dbReference type="Gene3D" id="2.70.170.10">
    <property type="entry name" value="Neurotransmitter-gated ion-channel ligand-binding domain"/>
    <property type="match status" value="1"/>
</dbReference>
<dbReference type="Gene3D" id="1.20.58.390">
    <property type="entry name" value="Neurotransmitter-gated ion-channel transmembrane domain"/>
    <property type="match status" value="1"/>
</dbReference>
<dbReference type="InterPro" id="IPR006028">
    <property type="entry name" value="GABAA/Glycine_rcpt"/>
</dbReference>
<dbReference type="InterPro" id="IPR008127">
    <property type="entry name" value="Glycine_rcpt_A"/>
</dbReference>
<dbReference type="InterPro" id="IPR006202">
    <property type="entry name" value="Neur_chan_lig-bd"/>
</dbReference>
<dbReference type="InterPro" id="IPR036734">
    <property type="entry name" value="Neur_chan_lig-bd_sf"/>
</dbReference>
<dbReference type="InterPro" id="IPR006201">
    <property type="entry name" value="Neur_channel"/>
</dbReference>
<dbReference type="InterPro" id="IPR036719">
    <property type="entry name" value="Neuro-gated_channel_TM_sf"/>
</dbReference>
<dbReference type="InterPro" id="IPR038050">
    <property type="entry name" value="Neuro_actylchol_rec"/>
</dbReference>
<dbReference type="InterPro" id="IPR006029">
    <property type="entry name" value="Neurotrans-gated_channel_TM"/>
</dbReference>
<dbReference type="InterPro" id="IPR018000">
    <property type="entry name" value="Neurotransmitter_ion_chnl_CS"/>
</dbReference>
<dbReference type="NCBIfam" id="TIGR00860">
    <property type="entry name" value="LIC"/>
    <property type="match status" value="1"/>
</dbReference>
<dbReference type="PANTHER" id="PTHR18945">
    <property type="entry name" value="NEUROTRANSMITTER GATED ION CHANNEL"/>
    <property type="match status" value="1"/>
</dbReference>
<dbReference type="Pfam" id="PF02931">
    <property type="entry name" value="Neur_chan_LBD"/>
    <property type="match status" value="1"/>
</dbReference>
<dbReference type="Pfam" id="PF02932">
    <property type="entry name" value="Neur_chan_memb"/>
    <property type="match status" value="1"/>
</dbReference>
<dbReference type="PRINTS" id="PR00253">
    <property type="entry name" value="GABAARECEPTR"/>
</dbReference>
<dbReference type="PRINTS" id="PR01673">
    <property type="entry name" value="GLYRALPHA"/>
</dbReference>
<dbReference type="PRINTS" id="PR00252">
    <property type="entry name" value="NRIONCHANNEL"/>
</dbReference>
<dbReference type="SUPFAM" id="SSF90112">
    <property type="entry name" value="Neurotransmitter-gated ion-channel transmembrane pore"/>
    <property type="match status" value="1"/>
</dbReference>
<dbReference type="SUPFAM" id="SSF63712">
    <property type="entry name" value="Nicotinic receptor ligand binding domain-like"/>
    <property type="match status" value="1"/>
</dbReference>
<dbReference type="PROSITE" id="PS00236">
    <property type="entry name" value="NEUROTR_ION_CHANNEL"/>
    <property type="match status" value="1"/>
</dbReference>
<protein>
    <recommendedName>
        <fullName>Glycine receptor subunit alpha-4</fullName>
    </recommendedName>
</protein>
<evidence type="ECO:0000250" key="1">
    <source>
        <dbReference type="UniProtKB" id="O93430"/>
    </source>
</evidence>
<evidence type="ECO:0000250" key="2">
    <source>
        <dbReference type="UniProtKB" id="P23415"/>
    </source>
</evidence>
<evidence type="ECO:0000255" key="3"/>
<evidence type="ECO:0000269" key="4">
    <source>
    </source>
</evidence>
<evidence type="ECO:0000269" key="5">
    <source>
    </source>
</evidence>
<evidence type="ECO:0000269" key="6">
    <source>
    </source>
</evidence>
<evidence type="ECO:0000305" key="7"/>
<evidence type="ECO:0000305" key="8">
    <source>
    </source>
</evidence>
<proteinExistence type="evidence at protein level"/>
<feature type="signal peptide" evidence="3">
    <location>
        <begin position="1"/>
        <end position="27"/>
    </location>
</feature>
<feature type="chain" id="PRO_0000000422" description="Glycine receptor subunit alpha-4">
    <location>
        <begin position="28"/>
        <end position="456"/>
    </location>
</feature>
<feature type="topological domain" description="Extracellular" evidence="2">
    <location>
        <begin position="28"/>
        <end position="256"/>
    </location>
</feature>
<feature type="transmembrane region" description="Helical; Name=1" evidence="2">
    <location>
        <begin position="257"/>
        <end position="278"/>
    </location>
</feature>
<feature type="topological domain" description="Cytoplasmic" evidence="2">
    <location>
        <begin position="279"/>
        <end position="283"/>
    </location>
</feature>
<feature type="transmembrane region" description="Helical; Name=2" evidence="2">
    <location>
        <begin position="284"/>
        <end position="304"/>
    </location>
</feature>
<feature type="topological domain" description="Extracellular" evidence="2">
    <location>
        <begin position="305"/>
        <end position="315"/>
    </location>
</feature>
<feature type="transmembrane region" description="Helical; Name=3" evidence="2">
    <location>
        <begin position="316"/>
        <end position="336"/>
    </location>
</feature>
<feature type="topological domain" description="Cytoplasmic" evidence="2">
    <location>
        <begin position="337"/>
        <end position="423"/>
    </location>
</feature>
<feature type="transmembrane region" description="Helical; Name=4" evidence="2">
    <location>
        <begin position="424"/>
        <end position="444"/>
    </location>
</feature>
<feature type="topological domain" description="Extracellular" evidence="2">
    <location>
        <begin position="445"/>
        <end position="456"/>
    </location>
</feature>
<feature type="binding site" evidence="1">
    <location>
        <begin position="236"/>
        <end position="241"/>
    </location>
    <ligand>
        <name>strychnine</name>
        <dbReference type="ChEBI" id="CHEBI:90700"/>
    </ligand>
</feature>
<feature type="site" description="Important for obstruction of the ion pore in the closed conformation" evidence="2">
    <location>
        <position position="295"/>
    </location>
</feature>
<feature type="glycosylation site" description="N-linked (GlcNAc...) asparagine" evidence="3">
    <location>
        <position position="71"/>
    </location>
</feature>
<feature type="disulfide bond" evidence="2">
    <location>
        <begin position="171"/>
        <end position="185"/>
    </location>
</feature>
<feature type="disulfide bond" evidence="2">
    <location>
        <begin position="232"/>
        <end position="243"/>
    </location>
</feature>
<feature type="sequence conflict" description="In Ref. 4; AAL69899." evidence="7" ref="4">
    <original>D</original>
    <variation>N</variation>
    <location>
        <position position="119"/>
    </location>
</feature>
<feature type="sequence conflict" description="In Ref. 4; AAL69899." evidence="7" ref="4">
    <original>D</original>
    <variation>E</variation>
    <location>
        <position position="124"/>
    </location>
</feature>
<reference key="1">
    <citation type="journal article" date="2000" name="Eur. J. Neurosci.">
        <title>Glycine receptors containing the alpha4 subunit in the embryonic sympathetic nervous system, spinal cord and male genital ridge.</title>
        <authorList>
            <person name="Harvey R.J."/>
            <person name="Schmieden V."/>
            <person name="Von Holst A."/>
            <person name="Laube B."/>
            <person name="Rohrer H."/>
            <person name="Betz H."/>
        </authorList>
    </citation>
    <scope>NUCLEOTIDE SEQUENCE [MRNA]</scope>
    <scope>FUNCTION</scope>
    <scope>TRANSPORTER ACTIVITY</scope>
    <scope>SUBCELLULAR LOCATION</scope>
    <scope>ACTIVITY REGULATION</scope>
    <source>
        <strain>C57BL/6J</strain>
    </source>
</reference>
<reference key="2">
    <citation type="journal article" date="2009" name="PLoS Biol.">
        <title>Lineage-specific biology revealed by a finished genome assembly of the mouse.</title>
        <authorList>
            <person name="Church D.M."/>
            <person name="Goodstadt L."/>
            <person name="Hillier L.W."/>
            <person name="Zody M.C."/>
            <person name="Goldstein S."/>
            <person name="She X."/>
            <person name="Bult C.J."/>
            <person name="Agarwala R."/>
            <person name="Cherry J.L."/>
            <person name="DiCuccio M."/>
            <person name="Hlavina W."/>
            <person name="Kapustin Y."/>
            <person name="Meric P."/>
            <person name="Maglott D."/>
            <person name="Birtle Z."/>
            <person name="Marques A.C."/>
            <person name="Graves T."/>
            <person name="Zhou S."/>
            <person name="Teague B."/>
            <person name="Potamousis K."/>
            <person name="Churas C."/>
            <person name="Place M."/>
            <person name="Herschleb J."/>
            <person name="Runnheim R."/>
            <person name="Forrest D."/>
            <person name="Amos-Landgraf J."/>
            <person name="Schwartz D.C."/>
            <person name="Cheng Z."/>
            <person name="Lindblad-Toh K."/>
            <person name="Eichler E.E."/>
            <person name="Ponting C.P."/>
        </authorList>
    </citation>
    <scope>NUCLEOTIDE SEQUENCE [LARGE SCALE GENOMIC DNA]</scope>
    <source>
        <strain>C57BL/6J</strain>
    </source>
</reference>
<reference key="3">
    <citation type="journal article" date="1994" name="J. Biol. Chem.">
        <title>Structural analysis of mouse glycine receptor alpha subunit genes. Identification and chromosomal localization of a novel variant.</title>
        <authorList>
            <person name="Matzenbach B."/>
            <person name="Maulet Y."/>
            <person name="Sefton L."/>
            <person name="Courtier B."/>
            <person name="Avner P."/>
            <person name="Guenet J.-L."/>
            <person name="Betz H."/>
        </authorList>
    </citation>
    <scope>NUCLEOTIDE SEQUENCE [GENOMIC DNA] OF 24-360</scope>
    <source>
        <strain>BALB/cJ</strain>
    </source>
</reference>
<reference key="4">
    <citation type="submission" date="2001-12" db="EMBL/GenBank/DDBJ databases">
        <title>Localization of different glycine receptor isoforms in murine spinal cord.</title>
        <authorList>
            <person name="Groemer T.-W."/>
            <person name="Becker C.-M."/>
            <person name="Becker K."/>
        </authorList>
    </citation>
    <scope>NUCLEOTIDE SEQUENCE [MRNA] OF 41-456</scope>
    <source>
        <strain>B6C3/Fe</strain>
        <tissue>Spinal cord</tissue>
    </source>
</reference>
<reference key="5">
    <citation type="journal article" date="2007" name="J. Comp. Neurol.">
        <title>Diversity of glycine receptors in the mouse retina: localization of the alpha4 subunit.</title>
        <authorList>
            <person name="Heinze L."/>
            <person name="Harvey R.J."/>
            <person name="Haverkamp S."/>
            <person name="Waessle H."/>
        </authorList>
    </citation>
    <scope>SUBCELLULAR LOCATION</scope>
    <scope>TISSUE SPECIFICITY</scope>
</reference>
<reference key="6">
    <citation type="journal article" date="2012" name="J. Comp. Neurol.">
        <title>Distribution of the glycine receptor beta-subunit in the mouse CNS as revealed by a novel monoclonal antibody.</title>
        <authorList>
            <person name="Weltzien F."/>
            <person name="Puller C."/>
            <person name="O'Sullivan G.A."/>
            <person name="Paarmann I."/>
            <person name="Betz H."/>
        </authorList>
    </citation>
    <scope>SUBCELLULAR LOCATION</scope>
    <scope>TISSUE SPECIFICITY</scope>
</reference>
<name>GLRA4_MOUSE</name>
<sequence length="456" mass="52514">MTTLVPASLFLLLWTLPGKVLLSVALAKEDVKSGLKGSQPMSPSDFLDKLMGRTSGYDARIRPNFKGPPVNVTCNIFINSFGSVTETTMDYRVNVFLRQQWNDPRLAYREYPDDSLDLDPSMLDSIWKPDLFFANEKGANFHEVTTDNKLLRIFKNGNVLYSIRLTLILSCPMDLKNFPMDIQTCTMQLESFGYTMNDLMFEWLEDAPAVQVAEGLTLPQFILRDEKDLGYCTKHYNTGKFTCIEVKFHLERQMGYYLIQMYIPSLLIVILSWVSFWINMDAAPARVGLGITTVLTMTTQSSGSRASLPKVSYVKAIDIWMAVCLLFVFAALLEYAAVNFVSRQHKEFMRLRRRQRRQRMEEDIIRESRFYFRGYGLGHCLQARDGGPMEGSSIYSPQPPTPLLKEGETMRKLYVDRAKRIDTISRAVFPFTFLVFNIFYWVVYKVLRSEDIHQAL</sequence>
<gene>
    <name type="primary">Glra4</name>
</gene>
<organism>
    <name type="scientific">Mus musculus</name>
    <name type="common">Mouse</name>
    <dbReference type="NCBI Taxonomy" id="10090"/>
    <lineage>
        <taxon>Eukaryota</taxon>
        <taxon>Metazoa</taxon>
        <taxon>Chordata</taxon>
        <taxon>Craniata</taxon>
        <taxon>Vertebrata</taxon>
        <taxon>Euteleostomi</taxon>
        <taxon>Mammalia</taxon>
        <taxon>Eutheria</taxon>
        <taxon>Euarchontoglires</taxon>
        <taxon>Glires</taxon>
        <taxon>Rodentia</taxon>
        <taxon>Myomorpha</taxon>
        <taxon>Muroidea</taxon>
        <taxon>Muridae</taxon>
        <taxon>Murinae</taxon>
        <taxon>Mus</taxon>
        <taxon>Mus</taxon>
    </lineage>
</organism>